<comment type="subcellular location">
    <subcellularLocation>
        <location evidence="5">Secreted</location>
    </subcellularLocation>
</comment>
<comment type="tissue specificity">
    <text evidence="5">Expressed by the venom duct.</text>
</comment>
<comment type="domain">
    <text evidence="4">The cysteine framework of the terepressin is C-C.</text>
</comment>
<comment type="PTM">
    <molecule>Terephysin</molecule>
    <text evidence="4">Contains 7 disulfide bonds.</text>
</comment>
<comment type="similarity">
    <text evidence="4">Belongs to the vasopressin/oxytocin family.</text>
</comment>
<reference key="1">
    <citation type="journal article" date="2015" name="Genome Biol. Evol.">
        <title>Molecular diversity and gene evolution of the venom arsenal of Terebridae predatory marine snails.</title>
        <authorList>
            <person name="Gorson J."/>
            <person name="Ramrattan G."/>
            <person name="Verdes A."/>
            <person name="Wright E.M."/>
            <person name="Kantor Y."/>
            <person name="Rajaram Srinivasan R."/>
            <person name="Musunuri R."/>
            <person name="Packer D."/>
            <person name="Albano G."/>
            <person name="Qiu W.G."/>
            <person name="Holford M."/>
        </authorList>
    </citation>
    <scope>NUCLEOTIDE SEQUENCE [MRNA]</scope>
    <source>
        <tissue>Venom duct</tissue>
    </source>
</reference>
<name>TESS_TERAN</name>
<feature type="signal peptide" evidence="2">
    <location>
        <begin position="1"/>
        <end position="33"/>
    </location>
</feature>
<feature type="peptide" id="PRO_0000435046" description="Terepressin">
    <location>
        <begin position="34"/>
        <end position="42"/>
    </location>
</feature>
<feature type="propeptide" id="PRO_0000435047" evidence="5">
    <location>
        <begin position="44"/>
        <end position="50"/>
    </location>
</feature>
<feature type="chain" id="PRO_0000435048" description="Terephysin">
    <location>
        <begin position="51"/>
        <end position="134"/>
    </location>
</feature>
<feature type="disulfide bond" evidence="4">
    <location>
        <begin position="34"/>
        <end position="39"/>
    </location>
</feature>
<feature type="disulfide bond" evidence="1">
    <location>
        <begin position="56"/>
        <end position="100"/>
    </location>
</feature>
<feature type="disulfide bond" evidence="1">
    <location>
        <begin position="59"/>
        <end position="73"/>
    </location>
</feature>
<feature type="disulfide bond" evidence="1">
    <location>
        <begin position="67"/>
        <end position="90"/>
    </location>
</feature>
<feature type="disulfide bond" evidence="1">
    <location>
        <begin position="74"/>
        <end position="80"/>
    </location>
</feature>
<feature type="disulfide bond" evidence="1">
    <location>
        <begin position="107"/>
        <end position="121"/>
    </location>
</feature>
<feature type="disulfide bond" evidence="1">
    <location>
        <begin position="115"/>
        <end position="133"/>
    </location>
</feature>
<feature type="disulfide bond" evidence="1">
    <location>
        <begin position="122"/>
        <end position="127"/>
    </location>
</feature>
<proteinExistence type="evidence at transcript level"/>
<evidence type="ECO:0000250" key="1">
    <source>
        <dbReference type="UniProtKB" id="P01175"/>
    </source>
</evidence>
<evidence type="ECO:0000255" key="2"/>
<evidence type="ECO:0000303" key="3">
    <source>
    </source>
</evidence>
<evidence type="ECO:0000305" key="4"/>
<evidence type="ECO:0000305" key="5">
    <source>
    </source>
</evidence>
<dbReference type="SMR" id="P0DN42"/>
<dbReference type="GO" id="GO:0005615">
    <property type="term" value="C:extracellular space"/>
    <property type="evidence" value="ECO:0007669"/>
    <property type="project" value="TreeGrafter"/>
</dbReference>
<dbReference type="GO" id="GO:0030141">
    <property type="term" value="C:secretory granule"/>
    <property type="evidence" value="ECO:0007669"/>
    <property type="project" value="TreeGrafter"/>
</dbReference>
<dbReference type="GO" id="GO:0005185">
    <property type="term" value="F:neurohypophyseal hormone activity"/>
    <property type="evidence" value="ECO:0007669"/>
    <property type="project" value="InterPro"/>
</dbReference>
<dbReference type="Gene3D" id="2.60.9.10">
    <property type="entry name" value="Neurohypophysial hormone domain"/>
    <property type="match status" value="1"/>
</dbReference>
<dbReference type="InterPro" id="IPR000981">
    <property type="entry name" value="Neurhyp_horm"/>
</dbReference>
<dbReference type="InterPro" id="IPR036387">
    <property type="entry name" value="Neurhyp_horm_dom_sf"/>
</dbReference>
<dbReference type="InterPro" id="IPR022423">
    <property type="entry name" value="Neurohypophysial_hormone_CS"/>
</dbReference>
<dbReference type="PANTHER" id="PTHR11681:SF5">
    <property type="entry name" value="ISOTOCIN"/>
    <property type="match status" value="1"/>
</dbReference>
<dbReference type="PANTHER" id="PTHR11681">
    <property type="entry name" value="NEUROPHYSIN"/>
    <property type="match status" value="1"/>
</dbReference>
<dbReference type="Pfam" id="PF00184">
    <property type="entry name" value="Hormone_5"/>
    <property type="match status" value="1"/>
</dbReference>
<dbReference type="PIRSF" id="PIRSF001815">
    <property type="entry name" value="Nonapeptide_hormone_precursor"/>
    <property type="match status" value="1"/>
</dbReference>
<dbReference type="PRINTS" id="PR00831">
    <property type="entry name" value="NEUROPHYSIN"/>
</dbReference>
<dbReference type="SMART" id="SM00003">
    <property type="entry name" value="NH"/>
    <property type="match status" value="1"/>
</dbReference>
<dbReference type="SUPFAM" id="SSF49606">
    <property type="entry name" value="Neurophysin II"/>
    <property type="match status" value="1"/>
</dbReference>
<dbReference type="PROSITE" id="PS00264">
    <property type="entry name" value="NEUROHYPOPHYS_HORM"/>
    <property type="match status" value="1"/>
</dbReference>
<sequence>MKCSVLQMSRLSWTACVLLLPLLLLTLQGGVQGCFIRNCPRGGKRAVDSVQPTRQCMSCGPEGVGQCVGPSICCGLAIGCLMGTPEAEVCQKENESSAPCAVSGRHCGMDNTGNCVADGICCVEDACSFNSLCR</sequence>
<keyword id="KW-0165">Cleavage on pair of basic residues</keyword>
<keyword id="KW-1015">Disulfide bond</keyword>
<keyword id="KW-0964">Secreted</keyword>
<keyword id="KW-0732">Signal</keyword>
<protein>
    <recommendedName>
        <fullName evidence="3">Terepressin/terephysin</fullName>
    </recommendedName>
    <alternativeName>
        <fullName evidence="3">Conopressin/Conophysin-like</fullName>
    </alternativeName>
    <component>
        <recommendedName>
            <fullName evidence="3">Terepressin</fullName>
        </recommendedName>
        <alternativeName>
            <fullName evidence="3">Conopressin-like</fullName>
        </alternativeName>
    </component>
    <component>
        <recommendedName>
            <fullName evidence="3">Terephysin</fullName>
        </recommendedName>
        <alternativeName>
            <fullName evidence="3">Conophysin-like</fullName>
        </alternativeName>
    </component>
</protein>
<organism>
    <name type="scientific">Terebra anilis</name>
    <name type="common">Auger snail</name>
    <name type="synonym">Cinguloterebra anilis</name>
    <dbReference type="NCBI Taxonomy" id="553697"/>
    <lineage>
        <taxon>Eukaryota</taxon>
        <taxon>Metazoa</taxon>
        <taxon>Spiralia</taxon>
        <taxon>Lophotrochozoa</taxon>
        <taxon>Mollusca</taxon>
        <taxon>Gastropoda</taxon>
        <taxon>Caenogastropoda</taxon>
        <taxon>Neogastropoda</taxon>
        <taxon>Conoidea</taxon>
        <taxon>Terebridae</taxon>
        <taxon>Terebra</taxon>
    </lineage>
</organism>
<accession>P0DN42</accession>